<protein>
    <recommendedName>
        <fullName evidence="1">GTPase Obg</fullName>
        <ecNumber evidence="1">3.6.5.-</ecNumber>
    </recommendedName>
    <alternativeName>
        <fullName evidence="1">GTP-binding protein Obg</fullName>
    </alternativeName>
</protein>
<name>OBG_CLOBH</name>
<reference key="1">
    <citation type="journal article" date="2007" name="Genome Res.">
        <title>Genome sequence of a proteolytic (Group I) Clostridium botulinum strain Hall A and comparative analysis of the clostridial genomes.</title>
        <authorList>
            <person name="Sebaihia M."/>
            <person name="Peck M.W."/>
            <person name="Minton N.P."/>
            <person name="Thomson N.R."/>
            <person name="Holden M.T.G."/>
            <person name="Mitchell W.J."/>
            <person name="Carter A.T."/>
            <person name="Bentley S.D."/>
            <person name="Mason D.R."/>
            <person name="Crossman L."/>
            <person name="Paul C.J."/>
            <person name="Ivens A."/>
            <person name="Wells-Bennik M.H.J."/>
            <person name="Davis I.J."/>
            <person name="Cerdeno-Tarraga A.M."/>
            <person name="Churcher C."/>
            <person name="Quail M.A."/>
            <person name="Chillingworth T."/>
            <person name="Feltwell T."/>
            <person name="Fraser A."/>
            <person name="Goodhead I."/>
            <person name="Hance Z."/>
            <person name="Jagels K."/>
            <person name="Larke N."/>
            <person name="Maddison M."/>
            <person name="Moule S."/>
            <person name="Mungall K."/>
            <person name="Norbertczak H."/>
            <person name="Rabbinowitsch E."/>
            <person name="Sanders M."/>
            <person name="Simmonds M."/>
            <person name="White B."/>
            <person name="Whithead S."/>
            <person name="Parkhill J."/>
        </authorList>
    </citation>
    <scope>NUCLEOTIDE SEQUENCE [LARGE SCALE GENOMIC DNA]</scope>
    <source>
        <strain>Hall / ATCC 3502 / NCTC 13319 / Type A</strain>
    </source>
</reference>
<reference key="2">
    <citation type="journal article" date="2007" name="PLoS ONE">
        <title>Analysis of the neurotoxin complex genes in Clostridium botulinum A1-A4 and B1 strains: BoNT/A3, /Ba4 and /B1 clusters are located within plasmids.</title>
        <authorList>
            <person name="Smith T.J."/>
            <person name="Hill K.K."/>
            <person name="Foley B.T."/>
            <person name="Detter J.C."/>
            <person name="Munk A.C."/>
            <person name="Bruce D.C."/>
            <person name="Doggett N.A."/>
            <person name="Smith L.A."/>
            <person name="Marks J.D."/>
            <person name="Xie G."/>
            <person name="Brettin T.S."/>
        </authorList>
    </citation>
    <scope>NUCLEOTIDE SEQUENCE [LARGE SCALE GENOMIC DNA]</scope>
    <source>
        <strain>Hall / ATCC 3502 / NCTC 13319 / Type A</strain>
    </source>
</reference>
<gene>
    <name evidence="1" type="primary">obg</name>
    <name type="ordered locus">CBO2986</name>
    <name type="ordered locus">CLC_2883</name>
</gene>
<sequence>MFIDTAKIFVKSGKGGDGSISFRREKYIAFGGPDGGDGGKGGNVVLVVDPNMTTLLDFTYKRKYKAEPGGNGAGSKCFGKNGKDLHIKVPMGTIVKDAETDKIMADLSKPEDSYVVAKGGRGGKGNCRFTTPTRQAPDFAEPGMPEEERWIKLELKLLADVGLIGFPNVGKSTLLSVVSKARPKIANYHFTTLKPNLGVVSIEGVNNFVIADIPGIIEGASEGVGLGLDFLRHVERTRVLIHVIDISSVEGRDPYDDFLKINEELKRYSVKLYDRPQIIAANKSDMLFDEEKFEEFKTKVEKHGYNKVFKISAATKQGVDDLMKEAARLLSTILVTDLEISEEDRFIEEEKRFTYSIRKEDNTYIVEGSFVDRLLNAVNVNDPDDLRYFHKVLKNKGVMEELMEMGIEDGDVVRLNDFEFDFLL</sequence>
<evidence type="ECO:0000255" key="1">
    <source>
        <dbReference type="HAMAP-Rule" id="MF_01454"/>
    </source>
</evidence>
<evidence type="ECO:0000255" key="2">
    <source>
        <dbReference type="PROSITE-ProRule" id="PRU01229"/>
    </source>
</evidence>
<evidence type="ECO:0000255" key="3">
    <source>
        <dbReference type="PROSITE-ProRule" id="PRU01231"/>
    </source>
</evidence>
<comment type="function">
    <text evidence="1">An essential GTPase which binds GTP, GDP and possibly (p)ppGpp with moderate affinity, with high nucleotide exchange rates and a fairly low GTP hydrolysis rate. Plays a role in control of the cell cycle, stress response, ribosome biogenesis and in those bacteria that undergo differentiation, in morphogenesis control.</text>
</comment>
<comment type="cofactor">
    <cofactor evidence="1">
        <name>Mg(2+)</name>
        <dbReference type="ChEBI" id="CHEBI:18420"/>
    </cofactor>
</comment>
<comment type="subunit">
    <text evidence="1">Monomer.</text>
</comment>
<comment type="subcellular location">
    <subcellularLocation>
        <location evidence="1">Cytoplasm</location>
    </subcellularLocation>
</comment>
<comment type="similarity">
    <text evidence="1">Belongs to the TRAFAC class OBG-HflX-like GTPase superfamily. OBG GTPase family.</text>
</comment>
<proteinExistence type="inferred from homology"/>
<organism>
    <name type="scientific">Clostridium botulinum (strain Hall / ATCC 3502 / NCTC 13319 / Type A)</name>
    <dbReference type="NCBI Taxonomy" id="441771"/>
    <lineage>
        <taxon>Bacteria</taxon>
        <taxon>Bacillati</taxon>
        <taxon>Bacillota</taxon>
        <taxon>Clostridia</taxon>
        <taxon>Eubacteriales</taxon>
        <taxon>Clostridiaceae</taxon>
        <taxon>Clostridium</taxon>
    </lineage>
</organism>
<dbReference type="EC" id="3.6.5.-" evidence="1"/>
<dbReference type="EMBL" id="CP000727">
    <property type="protein sequence ID" value="ABS36914.1"/>
    <property type="molecule type" value="Genomic_DNA"/>
</dbReference>
<dbReference type="EMBL" id="AM412317">
    <property type="protein sequence ID" value="CAL84548.1"/>
    <property type="molecule type" value="Genomic_DNA"/>
</dbReference>
<dbReference type="RefSeq" id="YP_001255478.1">
    <property type="nucleotide sequence ID" value="NC_009495.1"/>
</dbReference>
<dbReference type="RefSeq" id="YP_001388714.1">
    <property type="nucleotide sequence ID" value="NC_009698.1"/>
</dbReference>
<dbReference type="SMR" id="A5I666"/>
<dbReference type="GeneID" id="5185872"/>
<dbReference type="KEGG" id="cbh:CLC_2883"/>
<dbReference type="KEGG" id="cbo:CBO2986"/>
<dbReference type="PATRIC" id="fig|413999.7.peg.2964"/>
<dbReference type="HOGENOM" id="CLU_011747_2_1_9"/>
<dbReference type="PRO" id="PR:A5I666"/>
<dbReference type="Proteomes" id="UP000001986">
    <property type="component" value="Chromosome"/>
</dbReference>
<dbReference type="GO" id="GO:0005737">
    <property type="term" value="C:cytoplasm"/>
    <property type="evidence" value="ECO:0007669"/>
    <property type="project" value="UniProtKB-SubCell"/>
</dbReference>
<dbReference type="GO" id="GO:0005525">
    <property type="term" value="F:GTP binding"/>
    <property type="evidence" value="ECO:0000318"/>
    <property type="project" value="GO_Central"/>
</dbReference>
<dbReference type="GO" id="GO:0003924">
    <property type="term" value="F:GTPase activity"/>
    <property type="evidence" value="ECO:0000318"/>
    <property type="project" value="GO_Central"/>
</dbReference>
<dbReference type="GO" id="GO:0000287">
    <property type="term" value="F:magnesium ion binding"/>
    <property type="evidence" value="ECO:0007669"/>
    <property type="project" value="InterPro"/>
</dbReference>
<dbReference type="GO" id="GO:0042254">
    <property type="term" value="P:ribosome biogenesis"/>
    <property type="evidence" value="ECO:0007669"/>
    <property type="project" value="UniProtKB-UniRule"/>
</dbReference>
<dbReference type="CDD" id="cd01898">
    <property type="entry name" value="Obg"/>
    <property type="match status" value="1"/>
</dbReference>
<dbReference type="FunFam" id="2.70.210.12:FF:000001">
    <property type="entry name" value="GTPase Obg"/>
    <property type="match status" value="1"/>
</dbReference>
<dbReference type="Gene3D" id="3.30.300.350">
    <property type="entry name" value="GTP-binding protein OBG, C-terminal domain"/>
    <property type="match status" value="1"/>
</dbReference>
<dbReference type="Gene3D" id="2.70.210.12">
    <property type="entry name" value="GTP1/OBG domain"/>
    <property type="match status" value="1"/>
</dbReference>
<dbReference type="Gene3D" id="3.40.50.300">
    <property type="entry name" value="P-loop containing nucleotide triphosphate hydrolases"/>
    <property type="match status" value="1"/>
</dbReference>
<dbReference type="HAMAP" id="MF_01454">
    <property type="entry name" value="GTPase_Obg"/>
    <property type="match status" value="1"/>
</dbReference>
<dbReference type="InterPro" id="IPR031167">
    <property type="entry name" value="G_OBG"/>
</dbReference>
<dbReference type="InterPro" id="IPR006073">
    <property type="entry name" value="GTP-bd"/>
</dbReference>
<dbReference type="InterPro" id="IPR014100">
    <property type="entry name" value="GTP-bd_Obg/CgtA"/>
</dbReference>
<dbReference type="InterPro" id="IPR036346">
    <property type="entry name" value="GTP-bd_prot_GTP1/OBG_C_sf"/>
</dbReference>
<dbReference type="InterPro" id="IPR006074">
    <property type="entry name" value="GTP1-OBG_CS"/>
</dbReference>
<dbReference type="InterPro" id="IPR006169">
    <property type="entry name" value="GTP1_OBG_dom"/>
</dbReference>
<dbReference type="InterPro" id="IPR036726">
    <property type="entry name" value="GTP1_OBG_dom_sf"/>
</dbReference>
<dbReference type="InterPro" id="IPR045086">
    <property type="entry name" value="OBG_GTPase"/>
</dbReference>
<dbReference type="InterPro" id="IPR015349">
    <property type="entry name" value="OCT_dom"/>
</dbReference>
<dbReference type="InterPro" id="IPR027417">
    <property type="entry name" value="P-loop_NTPase"/>
</dbReference>
<dbReference type="InterPro" id="IPR005225">
    <property type="entry name" value="Small_GTP-bd"/>
</dbReference>
<dbReference type="NCBIfam" id="TIGR02729">
    <property type="entry name" value="Obg_CgtA"/>
    <property type="match status" value="1"/>
</dbReference>
<dbReference type="NCBIfam" id="TIGR03595">
    <property type="entry name" value="Obg_CgtA_exten"/>
    <property type="match status" value="1"/>
</dbReference>
<dbReference type="NCBIfam" id="NF008954">
    <property type="entry name" value="PRK12296.1"/>
    <property type="match status" value="1"/>
</dbReference>
<dbReference type="NCBIfam" id="NF008955">
    <property type="entry name" value="PRK12297.1"/>
    <property type="match status" value="1"/>
</dbReference>
<dbReference type="NCBIfam" id="NF008956">
    <property type="entry name" value="PRK12299.1"/>
    <property type="match status" value="1"/>
</dbReference>
<dbReference type="NCBIfam" id="TIGR00231">
    <property type="entry name" value="small_GTP"/>
    <property type="match status" value="1"/>
</dbReference>
<dbReference type="PANTHER" id="PTHR11702">
    <property type="entry name" value="DEVELOPMENTALLY REGULATED GTP-BINDING PROTEIN-RELATED"/>
    <property type="match status" value="1"/>
</dbReference>
<dbReference type="PANTHER" id="PTHR11702:SF31">
    <property type="entry name" value="MITOCHONDRIAL RIBOSOME-ASSOCIATED GTPASE 2"/>
    <property type="match status" value="1"/>
</dbReference>
<dbReference type="Pfam" id="PF09269">
    <property type="entry name" value="DUF1967"/>
    <property type="match status" value="1"/>
</dbReference>
<dbReference type="Pfam" id="PF01018">
    <property type="entry name" value="GTP1_OBG"/>
    <property type="match status" value="1"/>
</dbReference>
<dbReference type="Pfam" id="PF01926">
    <property type="entry name" value="MMR_HSR1"/>
    <property type="match status" value="1"/>
</dbReference>
<dbReference type="PIRSF" id="PIRSF002401">
    <property type="entry name" value="GTP_bd_Obg/CgtA"/>
    <property type="match status" value="1"/>
</dbReference>
<dbReference type="PRINTS" id="PR00326">
    <property type="entry name" value="GTP1OBG"/>
</dbReference>
<dbReference type="SUPFAM" id="SSF102741">
    <property type="entry name" value="Obg GTP-binding protein C-terminal domain"/>
    <property type="match status" value="1"/>
</dbReference>
<dbReference type="SUPFAM" id="SSF82051">
    <property type="entry name" value="Obg GTP-binding protein N-terminal domain"/>
    <property type="match status" value="1"/>
</dbReference>
<dbReference type="SUPFAM" id="SSF52540">
    <property type="entry name" value="P-loop containing nucleoside triphosphate hydrolases"/>
    <property type="match status" value="1"/>
</dbReference>
<dbReference type="PROSITE" id="PS51710">
    <property type="entry name" value="G_OBG"/>
    <property type="match status" value="1"/>
</dbReference>
<dbReference type="PROSITE" id="PS00905">
    <property type="entry name" value="GTP1_OBG"/>
    <property type="match status" value="1"/>
</dbReference>
<dbReference type="PROSITE" id="PS51883">
    <property type="entry name" value="OBG"/>
    <property type="match status" value="1"/>
</dbReference>
<dbReference type="PROSITE" id="PS51881">
    <property type="entry name" value="OCT"/>
    <property type="match status" value="1"/>
</dbReference>
<keyword id="KW-0963">Cytoplasm</keyword>
<keyword id="KW-0342">GTP-binding</keyword>
<keyword id="KW-0378">Hydrolase</keyword>
<keyword id="KW-0460">Magnesium</keyword>
<keyword id="KW-0479">Metal-binding</keyword>
<keyword id="KW-0547">Nucleotide-binding</keyword>
<keyword id="KW-1185">Reference proteome</keyword>
<accession>A5I666</accession>
<accession>A7G7E9</accession>
<feature type="chain" id="PRO_0000385842" description="GTPase Obg">
    <location>
        <begin position="1"/>
        <end position="424"/>
    </location>
</feature>
<feature type="domain" description="Obg" evidence="3">
    <location>
        <begin position="1"/>
        <end position="158"/>
    </location>
</feature>
<feature type="domain" description="OBG-type G" evidence="1">
    <location>
        <begin position="159"/>
        <end position="331"/>
    </location>
</feature>
<feature type="domain" description="OCT" evidence="2">
    <location>
        <begin position="345"/>
        <end position="424"/>
    </location>
</feature>
<feature type="binding site" evidence="1">
    <location>
        <begin position="165"/>
        <end position="172"/>
    </location>
    <ligand>
        <name>GTP</name>
        <dbReference type="ChEBI" id="CHEBI:37565"/>
    </ligand>
</feature>
<feature type="binding site" evidence="1">
    <location>
        <position position="172"/>
    </location>
    <ligand>
        <name>Mg(2+)</name>
        <dbReference type="ChEBI" id="CHEBI:18420"/>
    </ligand>
</feature>
<feature type="binding site" evidence="1">
    <location>
        <begin position="190"/>
        <end position="194"/>
    </location>
    <ligand>
        <name>GTP</name>
        <dbReference type="ChEBI" id="CHEBI:37565"/>
    </ligand>
</feature>
<feature type="binding site" evidence="1">
    <location>
        <position position="192"/>
    </location>
    <ligand>
        <name>Mg(2+)</name>
        <dbReference type="ChEBI" id="CHEBI:18420"/>
    </ligand>
</feature>
<feature type="binding site" evidence="1">
    <location>
        <begin position="212"/>
        <end position="215"/>
    </location>
    <ligand>
        <name>GTP</name>
        <dbReference type="ChEBI" id="CHEBI:37565"/>
    </ligand>
</feature>
<feature type="binding site" evidence="1">
    <location>
        <begin position="282"/>
        <end position="285"/>
    </location>
    <ligand>
        <name>GTP</name>
        <dbReference type="ChEBI" id="CHEBI:37565"/>
    </ligand>
</feature>
<feature type="binding site" evidence="1">
    <location>
        <begin position="312"/>
        <end position="314"/>
    </location>
    <ligand>
        <name>GTP</name>
        <dbReference type="ChEBI" id="CHEBI:37565"/>
    </ligand>
</feature>